<feature type="chain" id="PRO_0000453940" description="Septenin 1f">
    <location>
        <begin position="1"/>
        <end position="17"/>
    </location>
</feature>
<feature type="unsure residue" description="L or I" evidence="1">
    <location>
        <position position="11"/>
    </location>
</feature>
<accession>C0HLW7</accession>
<keyword id="KW-0903">Direct protein sequencing</keyword>
<keyword id="KW-0964">Secreted</keyword>
<dbReference type="GO" id="GO:0005576">
    <property type="term" value="C:extracellular region"/>
    <property type="evidence" value="ECO:0007669"/>
    <property type="project" value="UniProtKB-SubCell"/>
</dbReference>
<protein>
    <recommendedName>
        <fullName evidence="2">Septenin 1f</fullName>
    </recommendedName>
</protein>
<name>SEP1F_OSTSE</name>
<sequence>TDAVADGVHAISGVVDT</sequence>
<reference key="1">
    <citation type="journal article" date="2021" name="Rapid Commun. Mass Spectrom.">
        <title>Manual mass spectrometry de novo sequencing of the anionic host defense peptides of the Cuban Treefrog Osteopilus septentrionalis.</title>
        <authorList>
            <person name="Samgina T.Y."/>
            <person name="Tolpina M.D."/>
            <person name="Surin A.K."/>
            <person name="Kovalev S.V."/>
            <person name="Bosch R.A."/>
            <person name="Alonso I.P."/>
            <person name="Garcia F.A."/>
            <person name="Gonzalez Lopez L.J."/>
            <person name="Lebedev A.T."/>
        </authorList>
    </citation>
    <scope>PROTEIN SEQUENCE</scope>
    <scope>MASS SPECTROMETRY</scope>
</reference>
<comment type="function">
    <text evidence="2">May act as an antimicrobial peptide.</text>
</comment>
<comment type="subcellular location">
    <subcellularLocation>
        <location evidence="1">Secreted</location>
    </subcellularLocation>
</comment>
<comment type="tissue specificity">
    <text evidence="4">Expressed in skin glands.</text>
</comment>
<comment type="mass spectrometry"/>
<comment type="similarity">
    <text evidence="3">Belongs to the Frog skin active peptide (FSAP) family. Septenin subfamily.</text>
</comment>
<proteinExistence type="evidence at protein level"/>
<evidence type="ECO:0000269" key="1">
    <source>
    </source>
</evidence>
<evidence type="ECO:0000303" key="2">
    <source>
    </source>
</evidence>
<evidence type="ECO:0000305" key="3"/>
<evidence type="ECO:0000305" key="4">
    <source>
    </source>
</evidence>
<organism>
    <name type="scientific">Osteopilus septentrionalis</name>
    <name type="common">Cuban treefrog</name>
    <dbReference type="NCBI Taxonomy" id="317373"/>
    <lineage>
        <taxon>Eukaryota</taxon>
        <taxon>Metazoa</taxon>
        <taxon>Chordata</taxon>
        <taxon>Craniata</taxon>
        <taxon>Vertebrata</taxon>
        <taxon>Euteleostomi</taxon>
        <taxon>Amphibia</taxon>
        <taxon>Batrachia</taxon>
        <taxon>Anura</taxon>
        <taxon>Neobatrachia</taxon>
        <taxon>Hyloidea</taxon>
        <taxon>Hylidae</taxon>
        <taxon>Hylinae</taxon>
        <taxon>Lophiohylini</taxon>
        <taxon>Osteopilus</taxon>
    </lineage>
</organism>